<name>ACCA_SALTI</name>
<proteinExistence type="inferred from homology"/>
<dbReference type="EC" id="2.1.3.15" evidence="2"/>
<dbReference type="EMBL" id="AL513382">
    <property type="protein sequence ID" value="CAD08690.1"/>
    <property type="molecule type" value="Genomic_DNA"/>
</dbReference>
<dbReference type="EMBL" id="AE014613">
    <property type="protein sequence ID" value="AAO67963.1"/>
    <property type="molecule type" value="Genomic_DNA"/>
</dbReference>
<dbReference type="RefSeq" id="NP_454839.1">
    <property type="nucleotide sequence ID" value="NC_003198.1"/>
</dbReference>
<dbReference type="RefSeq" id="WP_000055753.1">
    <property type="nucleotide sequence ID" value="NZ_WSUR01000009.1"/>
</dbReference>
<dbReference type="SMR" id="P0A1C4"/>
<dbReference type="STRING" id="220341.gene:17584288"/>
<dbReference type="KEGG" id="stt:t0233"/>
<dbReference type="KEGG" id="sty:STY0255"/>
<dbReference type="PATRIC" id="fig|220341.7.peg.255"/>
<dbReference type="eggNOG" id="COG0825">
    <property type="taxonomic scope" value="Bacteria"/>
</dbReference>
<dbReference type="HOGENOM" id="CLU_015486_0_2_6"/>
<dbReference type="OMA" id="RNFGMAN"/>
<dbReference type="OrthoDB" id="9808023at2"/>
<dbReference type="UniPathway" id="UPA00655">
    <property type="reaction ID" value="UER00711"/>
</dbReference>
<dbReference type="Proteomes" id="UP000000541">
    <property type="component" value="Chromosome"/>
</dbReference>
<dbReference type="Proteomes" id="UP000002670">
    <property type="component" value="Chromosome"/>
</dbReference>
<dbReference type="GO" id="GO:0009317">
    <property type="term" value="C:acetyl-CoA carboxylase complex"/>
    <property type="evidence" value="ECO:0007669"/>
    <property type="project" value="InterPro"/>
</dbReference>
<dbReference type="GO" id="GO:0003989">
    <property type="term" value="F:acetyl-CoA carboxylase activity"/>
    <property type="evidence" value="ECO:0007669"/>
    <property type="project" value="InterPro"/>
</dbReference>
<dbReference type="GO" id="GO:0005524">
    <property type="term" value="F:ATP binding"/>
    <property type="evidence" value="ECO:0007669"/>
    <property type="project" value="UniProtKB-KW"/>
</dbReference>
<dbReference type="GO" id="GO:0016743">
    <property type="term" value="F:carboxyl- or carbamoyltransferase activity"/>
    <property type="evidence" value="ECO:0007669"/>
    <property type="project" value="UniProtKB-UniRule"/>
</dbReference>
<dbReference type="GO" id="GO:0006633">
    <property type="term" value="P:fatty acid biosynthetic process"/>
    <property type="evidence" value="ECO:0007669"/>
    <property type="project" value="UniProtKB-KW"/>
</dbReference>
<dbReference type="GO" id="GO:2001295">
    <property type="term" value="P:malonyl-CoA biosynthetic process"/>
    <property type="evidence" value="ECO:0007669"/>
    <property type="project" value="UniProtKB-UniRule"/>
</dbReference>
<dbReference type="FunFam" id="3.90.226.10:FF:000008">
    <property type="entry name" value="Acetyl-coenzyme A carboxylase carboxyl transferase subunit alpha"/>
    <property type="match status" value="1"/>
</dbReference>
<dbReference type="Gene3D" id="3.90.226.10">
    <property type="entry name" value="2-enoyl-CoA Hydratase, Chain A, domain 1"/>
    <property type="match status" value="1"/>
</dbReference>
<dbReference type="HAMAP" id="MF_00823">
    <property type="entry name" value="AcetylCoA_CT_alpha"/>
    <property type="match status" value="1"/>
</dbReference>
<dbReference type="InterPro" id="IPR001095">
    <property type="entry name" value="Acetyl_CoA_COase_a_su"/>
</dbReference>
<dbReference type="InterPro" id="IPR029045">
    <property type="entry name" value="ClpP/crotonase-like_dom_sf"/>
</dbReference>
<dbReference type="InterPro" id="IPR011763">
    <property type="entry name" value="COA_CT_C"/>
</dbReference>
<dbReference type="NCBIfam" id="TIGR00513">
    <property type="entry name" value="accA"/>
    <property type="match status" value="1"/>
</dbReference>
<dbReference type="NCBIfam" id="NF041504">
    <property type="entry name" value="AccA_sub"/>
    <property type="match status" value="1"/>
</dbReference>
<dbReference type="NCBIfam" id="NF004344">
    <property type="entry name" value="PRK05724.1"/>
    <property type="match status" value="1"/>
</dbReference>
<dbReference type="PANTHER" id="PTHR42853">
    <property type="entry name" value="ACETYL-COENZYME A CARBOXYLASE CARBOXYL TRANSFERASE SUBUNIT ALPHA"/>
    <property type="match status" value="1"/>
</dbReference>
<dbReference type="PANTHER" id="PTHR42853:SF3">
    <property type="entry name" value="ACETYL-COENZYME A CARBOXYLASE CARBOXYL TRANSFERASE SUBUNIT ALPHA, CHLOROPLASTIC"/>
    <property type="match status" value="1"/>
</dbReference>
<dbReference type="Pfam" id="PF03255">
    <property type="entry name" value="ACCA"/>
    <property type="match status" value="1"/>
</dbReference>
<dbReference type="PRINTS" id="PR01069">
    <property type="entry name" value="ACCCTRFRASEA"/>
</dbReference>
<dbReference type="SUPFAM" id="SSF52096">
    <property type="entry name" value="ClpP/crotonase"/>
    <property type="match status" value="1"/>
</dbReference>
<dbReference type="PROSITE" id="PS50989">
    <property type="entry name" value="COA_CT_CTER"/>
    <property type="match status" value="1"/>
</dbReference>
<keyword id="KW-0067">ATP-binding</keyword>
<keyword id="KW-0963">Cytoplasm</keyword>
<keyword id="KW-0275">Fatty acid biosynthesis</keyword>
<keyword id="KW-0276">Fatty acid metabolism</keyword>
<keyword id="KW-0444">Lipid biosynthesis</keyword>
<keyword id="KW-0443">Lipid metabolism</keyword>
<keyword id="KW-0547">Nucleotide-binding</keyword>
<keyword id="KW-0808">Transferase</keyword>
<reference key="1">
    <citation type="journal article" date="2001" name="Nature">
        <title>Complete genome sequence of a multiple drug resistant Salmonella enterica serovar Typhi CT18.</title>
        <authorList>
            <person name="Parkhill J."/>
            <person name="Dougan G."/>
            <person name="James K.D."/>
            <person name="Thomson N.R."/>
            <person name="Pickard D."/>
            <person name="Wain J."/>
            <person name="Churcher C.M."/>
            <person name="Mungall K.L."/>
            <person name="Bentley S.D."/>
            <person name="Holden M.T.G."/>
            <person name="Sebaihia M."/>
            <person name="Baker S."/>
            <person name="Basham D."/>
            <person name="Brooks K."/>
            <person name="Chillingworth T."/>
            <person name="Connerton P."/>
            <person name="Cronin A."/>
            <person name="Davis P."/>
            <person name="Davies R.M."/>
            <person name="Dowd L."/>
            <person name="White N."/>
            <person name="Farrar J."/>
            <person name="Feltwell T."/>
            <person name="Hamlin N."/>
            <person name="Haque A."/>
            <person name="Hien T.T."/>
            <person name="Holroyd S."/>
            <person name="Jagels K."/>
            <person name="Krogh A."/>
            <person name="Larsen T.S."/>
            <person name="Leather S."/>
            <person name="Moule S."/>
            <person name="O'Gaora P."/>
            <person name="Parry C."/>
            <person name="Quail M.A."/>
            <person name="Rutherford K.M."/>
            <person name="Simmonds M."/>
            <person name="Skelton J."/>
            <person name="Stevens K."/>
            <person name="Whitehead S."/>
            <person name="Barrell B.G."/>
        </authorList>
    </citation>
    <scope>NUCLEOTIDE SEQUENCE [LARGE SCALE GENOMIC DNA]</scope>
    <source>
        <strain>CT18</strain>
    </source>
</reference>
<reference key="2">
    <citation type="journal article" date="2003" name="J. Bacteriol.">
        <title>Comparative genomics of Salmonella enterica serovar Typhi strains Ty2 and CT18.</title>
        <authorList>
            <person name="Deng W."/>
            <person name="Liou S.-R."/>
            <person name="Plunkett G. III"/>
            <person name="Mayhew G.F."/>
            <person name="Rose D.J."/>
            <person name="Burland V."/>
            <person name="Kodoyianni V."/>
            <person name="Schwartz D.C."/>
            <person name="Blattner F.R."/>
        </authorList>
    </citation>
    <scope>NUCLEOTIDE SEQUENCE [LARGE SCALE GENOMIC DNA]</scope>
    <source>
        <strain>ATCC 700931 / Ty2</strain>
    </source>
</reference>
<comment type="function">
    <text evidence="2">Component of the acetyl coenzyme A carboxylase (ACC) complex. First, biotin carboxylase catalyzes the carboxylation of biotin on its carrier protein (BCCP) and then the CO(2) group is transferred by the carboxyltransferase to acetyl-CoA to form malonyl-CoA.</text>
</comment>
<comment type="catalytic activity">
    <reaction evidence="2">
        <text>N(6)-carboxybiotinyl-L-lysyl-[protein] + acetyl-CoA = N(6)-biotinyl-L-lysyl-[protein] + malonyl-CoA</text>
        <dbReference type="Rhea" id="RHEA:54728"/>
        <dbReference type="Rhea" id="RHEA-COMP:10505"/>
        <dbReference type="Rhea" id="RHEA-COMP:10506"/>
        <dbReference type="ChEBI" id="CHEBI:57288"/>
        <dbReference type="ChEBI" id="CHEBI:57384"/>
        <dbReference type="ChEBI" id="CHEBI:83144"/>
        <dbReference type="ChEBI" id="CHEBI:83145"/>
        <dbReference type="EC" id="2.1.3.15"/>
    </reaction>
</comment>
<comment type="pathway">
    <text evidence="2">Lipid metabolism; malonyl-CoA biosynthesis; malonyl-CoA from acetyl-CoA: step 1/1.</text>
</comment>
<comment type="subunit">
    <text evidence="2">Acetyl-CoA carboxylase is a heterohexamer composed of biotin carboxyl carrier protein (AccB), biotin carboxylase (AccC) and two subunits each of ACCase subunit alpha (AccA) and ACCase subunit beta (AccD).</text>
</comment>
<comment type="subcellular location">
    <subcellularLocation>
        <location evidence="2">Cytoplasm</location>
    </subcellularLocation>
</comment>
<comment type="similarity">
    <text evidence="2">Belongs to the AccA family.</text>
</comment>
<evidence type="ECO:0000250" key="1"/>
<evidence type="ECO:0000255" key="2">
    <source>
        <dbReference type="HAMAP-Rule" id="MF_00823"/>
    </source>
</evidence>
<evidence type="ECO:0000255" key="3">
    <source>
        <dbReference type="PROSITE-ProRule" id="PRU01137"/>
    </source>
</evidence>
<gene>
    <name evidence="2" type="primary">accA</name>
    <name type="ordered locus">STY0255</name>
    <name type="ordered locus">t0233</name>
</gene>
<protein>
    <recommendedName>
        <fullName evidence="2">Acetyl-coenzyme A carboxylase carboxyl transferase subunit alpha</fullName>
        <shortName evidence="2">ACCase subunit alpha</shortName>
        <shortName evidence="2">Acetyl-CoA carboxylase carboxyltransferase subunit alpha</shortName>
        <ecNumber evidence="2">2.1.3.15</ecNumber>
    </recommendedName>
</protein>
<feature type="initiator methionine" description="Removed" evidence="1">
    <location>
        <position position="1"/>
    </location>
</feature>
<feature type="chain" id="PRO_0000146776" description="Acetyl-coenzyme A carboxylase carboxyl transferase subunit alpha">
    <location>
        <begin position="2"/>
        <end position="319"/>
    </location>
</feature>
<feature type="domain" description="CoA carboxyltransferase C-terminal" evidence="3">
    <location>
        <begin position="35"/>
        <end position="296"/>
    </location>
</feature>
<sequence length="319" mass="35344">MSLNFLDFEQPIAELEAKIDSLTAVSRQDEKLDINIDEEVHRLREKSVELTRKIFADLGAWQVAQLARHPQRPYTLDYVRLAFDEFDELAGDRAYADDKAIVGGIARLEGRPVMIIGHQKGRETKEKIRRNFGMPAPEGYRKALRLMEMAERFNMPIITFIDTPGAYPGVGAEERGQSEAIARNLREMSRLNVPVICTVIGEGGSGGALAIGVGDKVNMLQYSTYSVISPEGCASILWKSADKAPLAAEAMGIIAPRLKELKLIDSIIPEPLGGAHRNPEAMAASLKAQLLEDLADLDVLSTDDLKNRRYQRLMSYGYA</sequence>
<accession>P0A1C4</accession>
<accession>P40674</accession>
<organism>
    <name type="scientific">Salmonella typhi</name>
    <dbReference type="NCBI Taxonomy" id="90370"/>
    <lineage>
        <taxon>Bacteria</taxon>
        <taxon>Pseudomonadati</taxon>
        <taxon>Pseudomonadota</taxon>
        <taxon>Gammaproteobacteria</taxon>
        <taxon>Enterobacterales</taxon>
        <taxon>Enterobacteriaceae</taxon>
        <taxon>Salmonella</taxon>
    </lineage>
</organism>